<reference key="1">
    <citation type="journal article" date="2002" name="Nature">
        <title>The genome sequence of Schizosaccharomyces pombe.</title>
        <authorList>
            <person name="Wood V."/>
            <person name="Gwilliam R."/>
            <person name="Rajandream M.A."/>
            <person name="Lyne M.H."/>
            <person name="Lyne R."/>
            <person name="Stewart A."/>
            <person name="Sgouros J.G."/>
            <person name="Peat N."/>
            <person name="Hayles J."/>
            <person name="Baker S.G."/>
            <person name="Basham D."/>
            <person name="Bowman S."/>
            <person name="Brooks K."/>
            <person name="Brown D."/>
            <person name="Brown S."/>
            <person name="Chillingworth T."/>
            <person name="Churcher C.M."/>
            <person name="Collins M."/>
            <person name="Connor R."/>
            <person name="Cronin A."/>
            <person name="Davis P."/>
            <person name="Feltwell T."/>
            <person name="Fraser A."/>
            <person name="Gentles S."/>
            <person name="Goble A."/>
            <person name="Hamlin N."/>
            <person name="Harris D.E."/>
            <person name="Hidalgo J."/>
            <person name="Hodgson G."/>
            <person name="Holroyd S."/>
            <person name="Hornsby T."/>
            <person name="Howarth S."/>
            <person name="Huckle E.J."/>
            <person name="Hunt S."/>
            <person name="Jagels K."/>
            <person name="James K.D."/>
            <person name="Jones L."/>
            <person name="Jones M."/>
            <person name="Leather S."/>
            <person name="McDonald S."/>
            <person name="McLean J."/>
            <person name="Mooney P."/>
            <person name="Moule S."/>
            <person name="Mungall K.L."/>
            <person name="Murphy L.D."/>
            <person name="Niblett D."/>
            <person name="Odell C."/>
            <person name="Oliver K."/>
            <person name="O'Neil S."/>
            <person name="Pearson D."/>
            <person name="Quail M.A."/>
            <person name="Rabbinowitsch E."/>
            <person name="Rutherford K.M."/>
            <person name="Rutter S."/>
            <person name="Saunders D."/>
            <person name="Seeger K."/>
            <person name="Sharp S."/>
            <person name="Skelton J."/>
            <person name="Simmonds M.N."/>
            <person name="Squares R."/>
            <person name="Squares S."/>
            <person name="Stevens K."/>
            <person name="Taylor K."/>
            <person name="Taylor R.G."/>
            <person name="Tivey A."/>
            <person name="Walsh S.V."/>
            <person name="Warren T."/>
            <person name="Whitehead S."/>
            <person name="Woodward J.R."/>
            <person name="Volckaert G."/>
            <person name="Aert R."/>
            <person name="Robben J."/>
            <person name="Grymonprez B."/>
            <person name="Weltjens I."/>
            <person name="Vanstreels E."/>
            <person name="Rieger M."/>
            <person name="Schaefer M."/>
            <person name="Mueller-Auer S."/>
            <person name="Gabel C."/>
            <person name="Fuchs M."/>
            <person name="Duesterhoeft A."/>
            <person name="Fritzc C."/>
            <person name="Holzer E."/>
            <person name="Moestl D."/>
            <person name="Hilbert H."/>
            <person name="Borzym K."/>
            <person name="Langer I."/>
            <person name="Beck A."/>
            <person name="Lehrach H."/>
            <person name="Reinhardt R."/>
            <person name="Pohl T.M."/>
            <person name="Eger P."/>
            <person name="Zimmermann W."/>
            <person name="Wedler H."/>
            <person name="Wambutt R."/>
            <person name="Purnelle B."/>
            <person name="Goffeau A."/>
            <person name="Cadieu E."/>
            <person name="Dreano S."/>
            <person name="Gloux S."/>
            <person name="Lelaure V."/>
            <person name="Mottier S."/>
            <person name="Galibert F."/>
            <person name="Aves S.J."/>
            <person name="Xiang Z."/>
            <person name="Hunt C."/>
            <person name="Moore K."/>
            <person name="Hurst S.M."/>
            <person name="Lucas M."/>
            <person name="Rochet M."/>
            <person name="Gaillardin C."/>
            <person name="Tallada V.A."/>
            <person name="Garzon A."/>
            <person name="Thode G."/>
            <person name="Daga R.R."/>
            <person name="Cruzado L."/>
            <person name="Jimenez J."/>
            <person name="Sanchez M."/>
            <person name="del Rey F."/>
            <person name="Benito J."/>
            <person name="Dominguez A."/>
            <person name="Revuelta J.L."/>
            <person name="Moreno S."/>
            <person name="Armstrong J."/>
            <person name="Forsburg S.L."/>
            <person name="Cerutti L."/>
            <person name="Lowe T."/>
            <person name="McCombie W.R."/>
            <person name="Paulsen I."/>
            <person name="Potashkin J."/>
            <person name="Shpakovski G.V."/>
            <person name="Ussery D."/>
            <person name="Barrell B.G."/>
            <person name="Nurse P."/>
        </authorList>
    </citation>
    <scope>NUCLEOTIDE SEQUENCE [LARGE SCALE GENOMIC DNA]</scope>
    <source>
        <strain>972 / ATCC 24843</strain>
    </source>
</reference>
<reference key="2">
    <citation type="journal article" date="2001" name="Biochem. Biophys. Res. Commun.">
        <title>The fission yeast ortholog of the coregulator SKIP interacts with the small subunit of U2AF.</title>
        <authorList>
            <person name="Ambrozkova M."/>
            <person name="Puta F."/>
            <person name="Fukova I."/>
            <person name="Skruzny M."/>
            <person name="Brabek J."/>
            <person name="Folk P."/>
        </authorList>
    </citation>
    <scope>HOMODIMERIZATION</scope>
    <scope>INTERACTION WITH U2AF23</scope>
</reference>
<reference key="3">
    <citation type="journal article" date="2001" name="Biochim. Biophys. Acta">
        <title>Cyclophilins of a novel subfamily interact with SNW/SKIP coregulator in Dictyostelium discoideum and Schizosaccharomyces pombe.</title>
        <authorList>
            <person name="Skruzny M."/>
            <person name="Ambrozkova M."/>
            <person name="Fukova I."/>
            <person name="Martinkova K."/>
            <person name="Blahuskova A."/>
            <person name="Hamplova L."/>
            <person name="Puta F."/>
            <person name="Folk P."/>
        </authorList>
    </citation>
    <scope>INTERACTION WITH CYP1</scope>
</reference>
<reference key="4">
    <citation type="journal article" date="2002" name="Mol. Cell. Biol.">
        <title>Proteomics analysis reveals stable multiprotein complexes in both fission and budding yeasts containing Myb-related Cdc5p/Cef1p, novel pre-mRNA splicing factors, and snRNAs.</title>
        <authorList>
            <person name="Ohi M.D."/>
            <person name="Link A.J."/>
            <person name="Ren L."/>
            <person name="Jennings J.L."/>
            <person name="McDonald W.H."/>
            <person name="Gould K.L."/>
        </authorList>
    </citation>
    <scope>IDENTIFICATION IN THE CWF COMPLEX</scope>
    <scope>IDENTIFICATION BY MASS SPECTROMETRY</scope>
</reference>
<reference key="5">
    <citation type="journal article" date="2008" name="J. Proteome Res.">
        <title>Phosphoproteome analysis of fission yeast.</title>
        <authorList>
            <person name="Wilson-Grady J.T."/>
            <person name="Villen J."/>
            <person name="Gygi S.P."/>
        </authorList>
    </citation>
    <scope>PHOSPHORYLATION [LARGE SCALE ANALYSIS] AT SER-228; SER-236 AND SER-376</scope>
    <scope>IDENTIFICATION BY MASS SPECTROMETRY</scope>
</reference>
<comment type="function">
    <text>Involved in pre-mRNA splicing.</text>
</comment>
<comment type="subunit">
    <text evidence="2 3 4">Homodimer. Interacts with cyp1 and the small 23 kDa subunit of the splicing factor U2AF (u2af23). Belongs to the 40S cdc5-associated complex (or cwf complex), a spliceosome sub-complex reminiscent of a late-stage spliceosome composed of the U2, U5 and U6 snRNAs and at least brr2, cdc5, cwf2/prp3, cwf3/syf1, cwf4/syf3, cwf5/ecm2, spp42/cwf6, cwf7/spf27, cwf8, cwf9, cwf10, cwf11, cwf12, prp45/cwf13, cwf14, cwf15, cwf16, cwf17, cwf18, cwf19, cwf20, cwf21, cwf22, cwf23, cwf24, cwf25, cwf26, cyp7/cwf27, cwf28, cwf29/ist3, lea1, msl1, prp5/cwf1, prp10, prp12/sap130, prp17, prp22, sap61, sap62, sap114, sap145, slu7, smb1, smd1, smd3, smf1, smg1 and syf2.</text>
</comment>
<comment type="interaction">
    <interactant intactId="EBI-457758">
        <id>Q09882</id>
    </interactant>
    <interactant intactId="EBI-538771">
        <id>P39964</id>
        <label>cdc5</label>
    </interactant>
    <organismsDiffer>false</organismsDiffer>
    <experiments>3</experiments>
</comment>
<comment type="interaction">
    <interactant intactId="EBI-457758">
        <id>Q09882</id>
    </interactant>
    <interactant intactId="EBI-1810686">
        <id>P87051</id>
        <label>ppi1</label>
    </interactant>
    <organismsDiffer>false</organismsDiffer>
    <experiments>4</experiments>
</comment>
<comment type="subcellular location">
    <subcellularLocation>
        <location evidence="6">Nucleus</location>
    </subcellularLocation>
</comment>
<comment type="similarity">
    <text evidence="6">Belongs to the SNW family.</text>
</comment>
<sequence length="557" mass="62697">MALLSEELSSILPNPDFDDEEEDYVERETSHADERQIGVKFHIPPYGQRKGWFPSSPEDFGDGGAFPEIHVAQYPLDMGRKRSAKSAGNTLALQVTSSGAVDYNAIARQGHEHGELVQASFRDLIPLRARLGVGEISLEKPSDEQKQEVANKTKLALQKILSKQIAQSQPKSAVVQQRDDPVYIRYTPSNQMGQALSKQRIIKMVTAEQDPMEPPKFRHKKVPRGPPSPPPPVLHSPPRKVSAQEQQDWQIPPSISNWKNPKGYTIPLDKRLAADGRGLNDVEINDGFAKFSEALYTVERQAREEVRYRAIMRQKMAEKEKQEKEQRLFMLAQKAREDRMGRNAASSGPSHAKPRSTSVSSEERSRSRAGSFSHHSESENEDEDSEAFRRRQELRRERRRQAEKDLRLSRMGAEKRAKLAEKDRPRDVAERVALGLSKPSMSSDTMIDSRLFNQASGLGSGFQDEDSYNVYDKPWRAAPSSTLYRPGATLSRQVDASAELERITSESRYDVLGNAHKKFKGSDEVVESRAGPVTFEKDIADPFGVDTFLNNVSSKKT</sequence>
<evidence type="ECO:0000256" key="1">
    <source>
        <dbReference type="SAM" id="MobiDB-lite"/>
    </source>
</evidence>
<evidence type="ECO:0000269" key="2">
    <source>
    </source>
</evidence>
<evidence type="ECO:0000269" key="3">
    <source>
    </source>
</evidence>
<evidence type="ECO:0000269" key="4">
    <source>
    </source>
</evidence>
<evidence type="ECO:0000269" key="5">
    <source>
    </source>
</evidence>
<evidence type="ECO:0000305" key="6"/>
<evidence type="ECO:0007829" key="7">
    <source>
        <dbReference type="PDB" id="9ESI"/>
    </source>
</evidence>
<organism>
    <name type="scientific">Schizosaccharomyces pombe (strain 972 / ATCC 24843)</name>
    <name type="common">Fission yeast</name>
    <dbReference type="NCBI Taxonomy" id="284812"/>
    <lineage>
        <taxon>Eukaryota</taxon>
        <taxon>Fungi</taxon>
        <taxon>Dikarya</taxon>
        <taxon>Ascomycota</taxon>
        <taxon>Taphrinomycotina</taxon>
        <taxon>Schizosaccharomycetes</taxon>
        <taxon>Schizosaccharomycetales</taxon>
        <taxon>Schizosaccharomycetaceae</taxon>
        <taxon>Schizosaccharomyces</taxon>
    </lineage>
</organism>
<feature type="chain" id="PRO_0000084822" description="Pre-mRNA-processing protein 45">
    <location>
        <begin position="1"/>
        <end position="557"/>
    </location>
</feature>
<feature type="region of interest" description="Disordered" evidence="1">
    <location>
        <begin position="1"/>
        <end position="32"/>
    </location>
</feature>
<feature type="region of interest" description="Disordered" evidence="1">
    <location>
        <begin position="208"/>
        <end position="243"/>
    </location>
</feature>
<feature type="region of interest" description="Disordered" evidence="1">
    <location>
        <begin position="316"/>
        <end position="444"/>
    </location>
</feature>
<feature type="compositionally biased region" description="Acidic residues" evidence="1">
    <location>
        <begin position="16"/>
        <end position="25"/>
    </location>
</feature>
<feature type="compositionally biased region" description="Pro residues" evidence="1">
    <location>
        <begin position="224"/>
        <end position="235"/>
    </location>
</feature>
<feature type="compositionally biased region" description="Basic and acidic residues" evidence="1">
    <location>
        <begin position="316"/>
        <end position="327"/>
    </location>
</feature>
<feature type="compositionally biased region" description="Basic and acidic residues" evidence="1">
    <location>
        <begin position="386"/>
        <end position="430"/>
    </location>
</feature>
<feature type="modified residue" description="Phosphoserine" evidence="5">
    <location>
        <position position="228"/>
    </location>
</feature>
<feature type="modified residue" description="Phosphoserine" evidence="5">
    <location>
        <position position="236"/>
    </location>
</feature>
<feature type="modified residue" description="Phosphoserine" evidence="5">
    <location>
        <position position="376"/>
    </location>
</feature>
<feature type="helix" evidence="7">
    <location>
        <begin position="103"/>
        <end position="105"/>
    </location>
</feature>
<feature type="turn" evidence="7">
    <location>
        <begin position="106"/>
        <end position="108"/>
    </location>
</feature>
<feature type="helix" evidence="7">
    <location>
        <begin position="114"/>
        <end position="116"/>
    </location>
</feature>
<feature type="helix" evidence="7">
    <location>
        <begin position="121"/>
        <end position="124"/>
    </location>
</feature>
<feature type="helix" evidence="7">
    <location>
        <begin position="127"/>
        <end position="129"/>
    </location>
</feature>
<feature type="helix" evidence="7">
    <location>
        <begin position="144"/>
        <end position="166"/>
    </location>
</feature>
<feature type="strand" evidence="7">
    <location>
        <begin position="182"/>
        <end position="188"/>
    </location>
</feature>
<feature type="strand" evidence="7">
    <location>
        <begin position="191"/>
        <end position="193"/>
    </location>
</feature>
<feature type="strand" evidence="7">
    <location>
        <begin position="200"/>
        <end position="206"/>
    </location>
</feature>
<feature type="helix" evidence="7">
    <location>
        <begin position="242"/>
        <end position="248"/>
    </location>
</feature>
<feature type="helix" evidence="7">
    <location>
        <begin position="268"/>
        <end position="273"/>
    </location>
</feature>
<feature type="strand" evidence="7">
    <location>
        <begin position="274"/>
        <end position="276"/>
    </location>
</feature>
<feature type="turn" evidence="7">
    <location>
        <begin position="277"/>
        <end position="279"/>
    </location>
</feature>
<feature type="helix" evidence="7">
    <location>
        <begin position="287"/>
        <end position="331"/>
    </location>
</feature>
<accession>Q09882</accession>
<protein>
    <recommendedName>
        <fullName>Pre-mRNA-processing protein 45</fullName>
    </recommendedName>
    <alternativeName>
        <fullName>Complexed with cdc5 protein 13</fullName>
    </alternativeName>
    <alternativeName>
        <fullName>Transcriptional coregulator snw1</fullName>
    </alternativeName>
</protein>
<dbReference type="EMBL" id="CU329672">
    <property type="protein sequence ID" value="CAB41231.1"/>
    <property type="molecule type" value="Genomic_DNA"/>
</dbReference>
<dbReference type="PIR" id="T39128">
    <property type="entry name" value="S62522"/>
</dbReference>
<dbReference type="RefSeq" id="NP_588213.1">
    <property type="nucleotide sequence ID" value="NM_001023203.2"/>
</dbReference>
<dbReference type="PDB" id="3JB9">
    <property type="method" value="EM"/>
    <property type="resolution" value="3.60 A"/>
    <property type="chains" value="M=1-557"/>
</dbReference>
<dbReference type="PDB" id="9ESH">
    <property type="method" value="EM"/>
    <property type="resolution" value="3.20 A"/>
    <property type="chains" value="L=1-557"/>
</dbReference>
<dbReference type="PDB" id="9ESI">
    <property type="method" value="EM"/>
    <property type="resolution" value="3.10 A"/>
    <property type="chains" value="L=1-557"/>
</dbReference>
<dbReference type="PDBsum" id="3JB9"/>
<dbReference type="PDBsum" id="9ESH"/>
<dbReference type="PDBsum" id="9ESI"/>
<dbReference type="EMDB" id="EMD-19941"/>
<dbReference type="EMDB" id="EMD-19942"/>
<dbReference type="SMR" id="Q09882"/>
<dbReference type="BioGRID" id="275562">
    <property type="interactions" value="30"/>
</dbReference>
<dbReference type="FunCoup" id="Q09882">
    <property type="interactions" value="882"/>
</dbReference>
<dbReference type="IntAct" id="Q09882">
    <property type="interactions" value="7"/>
</dbReference>
<dbReference type="STRING" id="284812.Q09882"/>
<dbReference type="iPTMnet" id="Q09882"/>
<dbReference type="PaxDb" id="4896-SPCC188.11.1"/>
<dbReference type="EnsemblFungi" id="SPCC188.11.1">
    <property type="protein sequence ID" value="SPCC188.11.1:pep"/>
    <property type="gene ID" value="SPCC188.11"/>
</dbReference>
<dbReference type="GeneID" id="2538988"/>
<dbReference type="KEGG" id="spo:2538988"/>
<dbReference type="PomBase" id="SPCC188.11">
    <property type="gene designation" value="prp45"/>
</dbReference>
<dbReference type="VEuPathDB" id="FungiDB:SPCC188.11"/>
<dbReference type="eggNOG" id="KOG2441">
    <property type="taxonomic scope" value="Eukaryota"/>
</dbReference>
<dbReference type="HOGENOM" id="CLU_006601_2_0_1"/>
<dbReference type="InParanoid" id="Q09882"/>
<dbReference type="OMA" id="YGQRRGW"/>
<dbReference type="PhylomeDB" id="Q09882"/>
<dbReference type="Reactome" id="R-SPO-72163">
    <property type="pathway name" value="mRNA Splicing - Major Pathway"/>
</dbReference>
<dbReference type="PRO" id="PR:Q09882"/>
<dbReference type="Proteomes" id="UP000002485">
    <property type="component" value="Chromosome III"/>
</dbReference>
<dbReference type="GO" id="GO:0005634">
    <property type="term" value="C:nucleus"/>
    <property type="evidence" value="ECO:0007005"/>
    <property type="project" value="PomBase"/>
</dbReference>
<dbReference type="GO" id="GO:0071014">
    <property type="term" value="C:post-mRNA release spliceosomal complex"/>
    <property type="evidence" value="ECO:0000314"/>
    <property type="project" value="PomBase"/>
</dbReference>
<dbReference type="GO" id="GO:0000974">
    <property type="term" value="C:Prp19 complex"/>
    <property type="evidence" value="ECO:0000314"/>
    <property type="project" value="PomBase"/>
</dbReference>
<dbReference type="GO" id="GO:0005681">
    <property type="term" value="C:spliceosomal complex"/>
    <property type="evidence" value="ECO:0000314"/>
    <property type="project" value="PomBase"/>
</dbReference>
<dbReference type="GO" id="GO:0060090">
    <property type="term" value="F:molecular adaptor activity"/>
    <property type="evidence" value="ECO:0000314"/>
    <property type="project" value="DisProt"/>
</dbReference>
<dbReference type="GO" id="GO:0003723">
    <property type="term" value="F:RNA binding"/>
    <property type="evidence" value="ECO:0000314"/>
    <property type="project" value="DisProt"/>
</dbReference>
<dbReference type="GO" id="GO:0045292">
    <property type="term" value="P:mRNA cis splicing, via spliceosome"/>
    <property type="evidence" value="ECO:0000269"/>
    <property type="project" value="PomBase"/>
</dbReference>
<dbReference type="DisProt" id="DP01658"/>
<dbReference type="InterPro" id="IPR017862">
    <property type="entry name" value="SKI-int_prot_SKIP"/>
</dbReference>
<dbReference type="InterPro" id="IPR004015">
    <property type="entry name" value="SKI-int_prot_SKIP_SNW-dom"/>
</dbReference>
<dbReference type="PANTHER" id="PTHR12096">
    <property type="entry name" value="NUCLEAR PROTEIN SKIP-RELATED"/>
    <property type="match status" value="1"/>
</dbReference>
<dbReference type="Pfam" id="PF02731">
    <property type="entry name" value="SKIP_SNW"/>
    <property type="match status" value="1"/>
</dbReference>
<keyword id="KW-0002">3D-structure</keyword>
<keyword id="KW-0507">mRNA processing</keyword>
<keyword id="KW-0508">mRNA splicing</keyword>
<keyword id="KW-0539">Nucleus</keyword>
<keyword id="KW-0597">Phosphoprotein</keyword>
<keyword id="KW-1185">Reference proteome</keyword>
<keyword id="KW-0747">Spliceosome</keyword>
<proteinExistence type="evidence at protein level"/>
<name>PRP45_SCHPO</name>
<gene>
    <name type="primary">prp45</name>
    <name type="synonym">cwf13</name>
    <name type="synonym">snw1</name>
    <name type="ORF">SPCC188.11</name>
    <name type="ORF">SPCC584.08</name>
</gene>